<organism>
    <name type="scientific">Actinobacillus pleuropneumoniae</name>
    <name type="common">Haemophilus pleuropneumoniae</name>
    <dbReference type="NCBI Taxonomy" id="715"/>
    <lineage>
        <taxon>Bacteria</taxon>
        <taxon>Pseudomonadati</taxon>
        <taxon>Pseudomonadota</taxon>
        <taxon>Gammaproteobacteria</taxon>
        <taxon>Pasteurellales</taxon>
        <taxon>Pasteurellaceae</taxon>
        <taxon>Actinobacillus</taxon>
    </lineage>
</organism>
<evidence type="ECO:0000250" key="1"/>
<evidence type="ECO:0000255" key="2">
    <source>
        <dbReference type="PROSITE-ProRule" id="PRU00441"/>
    </source>
</evidence>
<evidence type="ECO:0000305" key="3"/>
<proteinExistence type="inferred from homology"/>
<gene>
    <name type="primary">fbpB</name>
    <name type="synonym">afuB</name>
</gene>
<feature type="chain" id="PRO_0000060015" description="Ferric transport system permease protein FbpB">
    <location>
        <begin position="1"/>
        <end position="687"/>
    </location>
</feature>
<feature type="transmembrane region" description="Helical" evidence="2">
    <location>
        <begin position="10"/>
        <end position="30"/>
    </location>
</feature>
<feature type="transmembrane region" description="Helical" evidence="2">
    <location>
        <begin position="50"/>
        <end position="70"/>
    </location>
</feature>
<feature type="transmembrane region" description="Helical" evidence="2">
    <location>
        <begin position="85"/>
        <end position="105"/>
    </location>
</feature>
<feature type="transmembrane region" description="Helical" evidence="2">
    <location>
        <begin position="106"/>
        <end position="126"/>
    </location>
</feature>
<feature type="transmembrane region" description="Helical" evidence="2">
    <location>
        <begin position="141"/>
        <end position="161"/>
    </location>
</feature>
<feature type="transmembrane region" description="Helical" evidence="2">
    <location>
        <begin position="192"/>
        <end position="212"/>
    </location>
</feature>
<feature type="transmembrane region" description="Helical" evidence="2">
    <location>
        <begin position="226"/>
        <end position="246"/>
    </location>
</feature>
<feature type="transmembrane region" description="Helical" evidence="2">
    <location>
        <begin position="271"/>
        <end position="291"/>
    </location>
</feature>
<feature type="transmembrane region" description="Helical" evidence="2">
    <location>
        <begin position="318"/>
        <end position="338"/>
    </location>
</feature>
<feature type="transmembrane region" description="Helical" evidence="2">
    <location>
        <begin position="347"/>
        <end position="367"/>
    </location>
</feature>
<feature type="transmembrane region" description="Helical" evidence="2">
    <location>
        <begin position="378"/>
        <end position="398"/>
    </location>
</feature>
<feature type="transmembrane region" description="Helical" evidence="2">
    <location>
        <begin position="425"/>
        <end position="445"/>
    </location>
</feature>
<feature type="transmembrane region" description="Helical" evidence="2">
    <location>
        <begin position="450"/>
        <end position="472"/>
    </location>
</feature>
<feature type="transmembrane region" description="Helical" evidence="2">
    <location>
        <begin position="484"/>
        <end position="504"/>
    </location>
</feature>
<feature type="transmembrane region" description="Helical" evidence="2">
    <location>
        <begin position="517"/>
        <end position="537"/>
    </location>
</feature>
<feature type="transmembrane region" description="Helical" evidence="2">
    <location>
        <begin position="538"/>
        <end position="558"/>
    </location>
</feature>
<feature type="transmembrane region" description="Helical" evidence="2">
    <location>
        <begin position="594"/>
        <end position="614"/>
    </location>
</feature>
<feature type="transmembrane region" description="Helical" evidence="2">
    <location>
        <begin position="620"/>
        <end position="640"/>
    </location>
</feature>
<feature type="transmembrane region" description="Helical" evidence="2">
    <location>
        <begin position="649"/>
        <end position="669"/>
    </location>
</feature>
<feature type="domain" description="ABC transmembrane type-1 1" evidence="2">
    <location>
        <begin position="188"/>
        <end position="393"/>
    </location>
</feature>
<feature type="domain" description="ABC transmembrane type-1 2" evidence="2">
    <location>
        <begin position="479"/>
        <end position="669"/>
    </location>
</feature>
<protein>
    <recommendedName>
        <fullName>Ferric transport system permease protein FbpB</fullName>
    </recommendedName>
</protein>
<comment type="function">
    <text evidence="1">Part of the ABC transporter complex FbpABC (TC 3.A.1.10.1) involved in Fe(3+) ions import. Probably responsible for the translocation of the substrate across the membrane (By similarity).</text>
</comment>
<comment type="subunit">
    <text evidence="3">The complex is composed of two ATP-binding proteins (FbpC), two transmembrane proteins (FbpB) and a solute-binding protein (FbpA).</text>
</comment>
<comment type="subcellular location">
    <subcellularLocation>
        <location evidence="3">Cell inner membrane</location>
        <topology evidence="3">Multi-pass membrane protein</topology>
    </subcellularLocation>
</comment>
<comment type="similarity">
    <text evidence="3">Belongs to the binding-protein-dependent transport system permease family. FbpB subfamily.</text>
</comment>
<sequence>MDSITNKRSLFESSHFWILLSLIAFIALPSKALDYGLLESTADEFLDAMGWSSVNLTILWFLPLIGFWLLPSLKLSTETQAKVELGLISFILLFAFISATIYKVSMGYSVIVLIATLTALATFAFAKLKMMQGDKFIIGALLSIILLIFFFIVYPTVAIFISMFYDGETFAPEQVVRILGQGYIVRVISNSLFLSGFVGIVSTVFGLAFALYTTRIAHRTAFIGKIFSILPIVTPPFVVGLGVTLMLGRSGYVTEFLDTYFGFKDHNWLYGFNGIAIAQILAFAPISFMILDGALKSIHPSIEEASYTLRANRYQTFYNIIFPLLRPALANSFLIVFIQSLADFSNPLVLGGSFDVIATQIYFYIAGSQLDYASASTLGSMLLIFSLLIFIVQYMWIGNRSYVTVSGKSYRGDVQDLPSGLKYTIIVMLGFWVVFNFALYGSIFYGSFTVNWGVDYTLTLNNYAMLFGQGLSDGAWPSLINTMIYAGIAAPLTALFGLLIAYIVVRKDFQGKKTLEFLTMLCFAVPGTVAGVSYILAFNDAPMYITGTGIIIIISMVMRDLPIGMRAAIAGLGQLDKSLDEASLSLKGSSLKTIWFIVFPLLKPALLSALVTSFVRAMTTVSAIVFLVTADTRVATAYILNRVEDGEYGVAIAYGSILIVVMMAIILFFDWIVGDTRIPKSQAKKAD</sequence>
<reference key="1">
    <citation type="journal article" date="1996" name="FEMS Microbiol. Lett.">
        <title>Identification of a locus involved in the utilization of iron by Actinobacillus pleuropneumoniae.</title>
        <authorList>
            <person name="Chin N."/>
            <person name="Frey J."/>
            <person name="Chang C.F."/>
            <person name="Chang Y.F."/>
        </authorList>
    </citation>
    <scope>NUCLEOTIDE SEQUENCE [GENOMIC DNA]</scope>
    <source>
        <strain>ATCC 27088 / DSM 13472 / CCM 5869 / S4074 / Serotype 1</strain>
        <strain>K17 / Serotype 5</strain>
    </source>
</reference>
<dbReference type="EMBL" id="U04954">
    <property type="protein sequence ID" value="AAB17217.1"/>
    <property type="molecule type" value="Genomic_DNA"/>
</dbReference>
<dbReference type="EMBL" id="U05042">
    <property type="protein sequence ID" value="AAB05031.1"/>
    <property type="molecule type" value="Genomic_DNA"/>
</dbReference>
<dbReference type="SMR" id="Q44123"/>
<dbReference type="GO" id="GO:0005886">
    <property type="term" value="C:plasma membrane"/>
    <property type="evidence" value="ECO:0007669"/>
    <property type="project" value="UniProtKB-SubCell"/>
</dbReference>
<dbReference type="GO" id="GO:0006826">
    <property type="term" value="P:iron ion transport"/>
    <property type="evidence" value="ECO:0007669"/>
    <property type="project" value="UniProtKB-KW"/>
</dbReference>
<dbReference type="GO" id="GO:0055085">
    <property type="term" value="P:transmembrane transport"/>
    <property type="evidence" value="ECO:0007669"/>
    <property type="project" value="InterPro"/>
</dbReference>
<dbReference type="CDD" id="cd06261">
    <property type="entry name" value="TM_PBP2"/>
    <property type="match status" value="2"/>
</dbReference>
<dbReference type="FunFam" id="1.10.3720.10:FF:000120">
    <property type="entry name" value="Iron(III) ABC transporter permease"/>
    <property type="match status" value="1"/>
</dbReference>
<dbReference type="FunFam" id="1.10.3720.10:FF:000093">
    <property type="entry name" value="Iron(III) ABC transporter, permease protein"/>
    <property type="match status" value="1"/>
</dbReference>
<dbReference type="Gene3D" id="1.10.3720.10">
    <property type="entry name" value="MetI-like"/>
    <property type="match status" value="2"/>
</dbReference>
<dbReference type="InterPro" id="IPR000515">
    <property type="entry name" value="MetI-like"/>
</dbReference>
<dbReference type="InterPro" id="IPR035906">
    <property type="entry name" value="MetI-like_sf"/>
</dbReference>
<dbReference type="PANTHER" id="PTHR30183">
    <property type="entry name" value="MOLYBDENUM TRANSPORT SYSTEM PERMEASE PROTEIN MODB"/>
    <property type="match status" value="1"/>
</dbReference>
<dbReference type="PANTHER" id="PTHR30183:SF3">
    <property type="entry name" value="MOLYBDENUM TRANSPORT SYSTEM PERMEASE PROTEIN MODB"/>
    <property type="match status" value="1"/>
</dbReference>
<dbReference type="Pfam" id="PF00528">
    <property type="entry name" value="BPD_transp_1"/>
    <property type="match status" value="2"/>
</dbReference>
<dbReference type="SUPFAM" id="SSF161098">
    <property type="entry name" value="MetI-like"/>
    <property type="match status" value="2"/>
</dbReference>
<dbReference type="PROSITE" id="PS50928">
    <property type="entry name" value="ABC_TM1"/>
    <property type="match status" value="2"/>
</dbReference>
<name>FBPB_ACTPL</name>
<accession>Q44123</accession>
<accession>Q44122</accession>
<keyword id="KW-0997">Cell inner membrane</keyword>
<keyword id="KW-1003">Cell membrane</keyword>
<keyword id="KW-0406">Ion transport</keyword>
<keyword id="KW-0408">Iron</keyword>
<keyword id="KW-0410">Iron transport</keyword>
<keyword id="KW-0472">Membrane</keyword>
<keyword id="KW-0677">Repeat</keyword>
<keyword id="KW-0812">Transmembrane</keyword>
<keyword id="KW-1133">Transmembrane helix</keyword>
<keyword id="KW-0813">Transport</keyword>